<name>RS19_CLOBM</name>
<proteinExistence type="inferred from homology"/>
<keyword id="KW-0687">Ribonucleoprotein</keyword>
<keyword id="KW-0689">Ribosomal protein</keyword>
<keyword id="KW-0694">RNA-binding</keyword>
<keyword id="KW-0699">rRNA-binding</keyword>
<organism>
    <name type="scientific">Clostridium botulinum (strain Loch Maree / Type A3)</name>
    <dbReference type="NCBI Taxonomy" id="498214"/>
    <lineage>
        <taxon>Bacteria</taxon>
        <taxon>Bacillati</taxon>
        <taxon>Bacillota</taxon>
        <taxon>Clostridia</taxon>
        <taxon>Eubacteriales</taxon>
        <taxon>Clostridiaceae</taxon>
        <taxon>Clostridium</taxon>
    </lineage>
</organism>
<feature type="chain" id="PRO_1000127954" description="Small ribosomal subunit protein uS19">
    <location>
        <begin position="1"/>
        <end position="94"/>
    </location>
</feature>
<sequence length="94" mass="10908">MSRSVKKGPYIQEVLLKRINEMNKNGEKKVLKTWSRSSTIFPQMIGHTIAVHDGRKHVPVYITEDMVGHKLGEFVLTRTYRGHDDKSEKSSRLR</sequence>
<evidence type="ECO:0000255" key="1">
    <source>
        <dbReference type="HAMAP-Rule" id="MF_00531"/>
    </source>
</evidence>
<evidence type="ECO:0000305" key="2"/>
<protein>
    <recommendedName>
        <fullName evidence="1">Small ribosomal subunit protein uS19</fullName>
    </recommendedName>
    <alternativeName>
        <fullName evidence="2">30S ribosomal protein S19</fullName>
    </alternativeName>
</protein>
<gene>
    <name evidence="1" type="primary">rpsS</name>
    <name type="ordered locus">CLK_2920</name>
</gene>
<dbReference type="EMBL" id="CP000962">
    <property type="protein sequence ID" value="ACA54371.1"/>
    <property type="molecule type" value="Genomic_DNA"/>
</dbReference>
<dbReference type="RefSeq" id="WP_003360195.1">
    <property type="nucleotide sequence ID" value="NC_010520.1"/>
</dbReference>
<dbReference type="SMR" id="B1KSM1"/>
<dbReference type="KEGG" id="cbl:CLK_2920"/>
<dbReference type="HOGENOM" id="CLU_144911_0_1_9"/>
<dbReference type="GO" id="GO:0005737">
    <property type="term" value="C:cytoplasm"/>
    <property type="evidence" value="ECO:0007669"/>
    <property type="project" value="UniProtKB-ARBA"/>
</dbReference>
<dbReference type="GO" id="GO:0015935">
    <property type="term" value="C:small ribosomal subunit"/>
    <property type="evidence" value="ECO:0007669"/>
    <property type="project" value="InterPro"/>
</dbReference>
<dbReference type="GO" id="GO:0019843">
    <property type="term" value="F:rRNA binding"/>
    <property type="evidence" value="ECO:0007669"/>
    <property type="project" value="UniProtKB-UniRule"/>
</dbReference>
<dbReference type="GO" id="GO:0003735">
    <property type="term" value="F:structural constituent of ribosome"/>
    <property type="evidence" value="ECO:0007669"/>
    <property type="project" value="InterPro"/>
</dbReference>
<dbReference type="GO" id="GO:0000028">
    <property type="term" value="P:ribosomal small subunit assembly"/>
    <property type="evidence" value="ECO:0007669"/>
    <property type="project" value="TreeGrafter"/>
</dbReference>
<dbReference type="GO" id="GO:0006412">
    <property type="term" value="P:translation"/>
    <property type="evidence" value="ECO:0007669"/>
    <property type="project" value="UniProtKB-UniRule"/>
</dbReference>
<dbReference type="FunFam" id="3.30.860.10:FF:000001">
    <property type="entry name" value="30S ribosomal protein S19"/>
    <property type="match status" value="1"/>
</dbReference>
<dbReference type="Gene3D" id="3.30.860.10">
    <property type="entry name" value="30s Ribosomal Protein S19, Chain A"/>
    <property type="match status" value="1"/>
</dbReference>
<dbReference type="HAMAP" id="MF_00531">
    <property type="entry name" value="Ribosomal_uS19"/>
    <property type="match status" value="1"/>
</dbReference>
<dbReference type="InterPro" id="IPR002222">
    <property type="entry name" value="Ribosomal_uS19"/>
</dbReference>
<dbReference type="InterPro" id="IPR005732">
    <property type="entry name" value="Ribosomal_uS19_bac-type"/>
</dbReference>
<dbReference type="InterPro" id="IPR020934">
    <property type="entry name" value="Ribosomal_uS19_CS"/>
</dbReference>
<dbReference type="InterPro" id="IPR023575">
    <property type="entry name" value="Ribosomal_uS19_SF"/>
</dbReference>
<dbReference type="NCBIfam" id="TIGR01050">
    <property type="entry name" value="rpsS_bact"/>
    <property type="match status" value="1"/>
</dbReference>
<dbReference type="PANTHER" id="PTHR11880">
    <property type="entry name" value="RIBOSOMAL PROTEIN S19P FAMILY MEMBER"/>
    <property type="match status" value="1"/>
</dbReference>
<dbReference type="PANTHER" id="PTHR11880:SF8">
    <property type="entry name" value="SMALL RIBOSOMAL SUBUNIT PROTEIN US19M"/>
    <property type="match status" value="1"/>
</dbReference>
<dbReference type="Pfam" id="PF00203">
    <property type="entry name" value="Ribosomal_S19"/>
    <property type="match status" value="1"/>
</dbReference>
<dbReference type="PIRSF" id="PIRSF002144">
    <property type="entry name" value="Ribosomal_S19"/>
    <property type="match status" value="1"/>
</dbReference>
<dbReference type="PRINTS" id="PR00975">
    <property type="entry name" value="RIBOSOMALS19"/>
</dbReference>
<dbReference type="SUPFAM" id="SSF54570">
    <property type="entry name" value="Ribosomal protein S19"/>
    <property type="match status" value="1"/>
</dbReference>
<dbReference type="PROSITE" id="PS00323">
    <property type="entry name" value="RIBOSOMAL_S19"/>
    <property type="match status" value="1"/>
</dbReference>
<accession>B1KSM1</accession>
<comment type="function">
    <text evidence="1">Protein S19 forms a complex with S13 that binds strongly to the 16S ribosomal RNA.</text>
</comment>
<comment type="similarity">
    <text evidence="1">Belongs to the universal ribosomal protein uS19 family.</text>
</comment>
<reference key="1">
    <citation type="journal article" date="2007" name="PLoS ONE">
        <title>Analysis of the neurotoxin complex genes in Clostridium botulinum A1-A4 and B1 strains: BoNT/A3, /Ba4 and /B1 clusters are located within plasmids.</title>
        <authorList>
            <person name="Smith T.J."/>
            <person name="Hill K.K."/>
            <person name="Foley B.T."/>
            <person name="Detter J.C."/>
            <person name="Munk A.C."/>
            <person name="Bruce D.C."/>
            <person name="Doggett N.A."/>
            <person name="Smith L.A."/>
            <person name="Marks J.D."/>
            <person name="Xie G."/>
            <person name="Brettin T.S."/>
        </authorList>
    </citation>
    <scope>NUCLEOTIDE SEQUENCE [LARGE SCALE GENOMIC DNA]</scope>
    <source>
        <strain>Loch Maree / Type A3</strain>
    </source>
</reference>